<accession>Q6MLI2</accession>
<gene>
    <name evidence="1" type="primary">argS</name>
    <name type="ordered locus">Bd2027</name>
</gene>
<reference key="1">
    <citation type="journal article" date="2004" name="Science">
        <title>A predator unmasked: life cycle of Bdellovibrio bacteriovorus from a genomic perspective.</title>
        <authorList>
            <person name="Rendulic S."/>
            <person name="Jagtap P."/>
            <person name="Rosinus A."/>
            <person name="Eppinger M."/>
            <person name="Baar C."/>
            <person name="Lanz C."/>
            <person name="Keller H."/>
            <person name="Lambert C."/>
            <person name="Evans K.J."/>
            <person name="Goesmann A."/>
            <person name="Meyer F."/>
            <person name="Sockett R.E."/>
            <person name="Schuster S.C."/>
        </authorList>
    </citation>
    <scope>NUCLEOTIDE SEQUENCE [LARGE SCALE GENOMIC DNA]</scope>
    <source>
        <strain>ATCC 15356 / DSM 50701 / NCIMB 9529 / HD100</strain>
    </source>
</reference>
<evidence type="ECO:0000255" key="1">
    <source>
        <dbReference type="HAMAP-Rule" id="MF_00123"/>
    </source>
</evidence>
<feature type="chain" id="PRO_0000241990" description="Arginine--tRNA ligase">
    <location>
        <begin position="1"/>
        <end position="580"/>
    </location>
</feature>
<feature type="short sequence motif" description="'HIGH' region">
    <location>
        <begin position="127"/>
        <end position="137"/>
    </location>
</feature>
<dbReference type="EC" id="6.1.1.19" evidence="1"/>
<dbReference type="EMBL" id="BX842651">
    <property type="protein sequence ID" value="CAE79875.1"/>
    <property type="molecule type" value="Genomic_DNA"/>
</dbReference>
<dbReference type="RefSeq" id="WP_011164477.1">
    <property type="nucleotide sequence ID" value="NC_005363.1"/>
</dbReference>
<dbReference type="SMR" id="Q6MLI2"/>
<dbReference type="STRING" id="264462.Bd2027"/>
<dbReference type="GeneID" id="93012976"/>
<dbReference type="KEGG" id="bba:Bd2027"/>
<dbReference type="eggNOG" id="COG0018">
    <property type="taxonomic scope" value="Bacteria"/>
</dbReference>
<dbReference type="HOGENOM" id="CLU_006406_6_1_7"/>
<dbReference type="Proteomes" id="UP000008080">
    <property type="component" value="Chromosome"/>
</dbReference>
<dbReference type="GO" id="GO:0005737">
    <property type="term" value="C:cytoplasm"/>
    <property type="evidence" value="ECO:0007669"/>
    <property type="project" value="UniProtKB-SubCell"/>
</dbReference>
<dbReference type="GO" id="GO:0004814">
    <property type="term" value="F:arginine-tRNA ligase activity"/>
    <property type="evidence" value="ECO:0007669"/>
    <property type="project" value="UniProtKB-UniRule"/>
</dbReference>
<dbReference type="GO" id="GO:0005524">
    <property type="term" value="F:ATP binding"/>
    <property type="evidence" value="ECO:0007669"/>
    <property type="project" value="UniProtKB-UniRule"/>
</dbReference>
<dbReference type="GO" id="GO:0006420">
    <property type="term" value="P:arginyl-tRNA aminoacylation"/>
    <property type="evidence" value="ECO:0007669"/>
    <property type="project" value="UniProtKB-UniRule"/>
</dbReference>
<dbReference type="CDD" id="cd07956">
    <property type="entry name" value="Anticodon_Ia_Arg"/>
    <property type="match status" value="1"/>
</dbReference>
<dbReference type="FunFam" id="1.10.730.10:FF:000006">
    <property type="entry name" value="Arginyl-tRNA synthetase 2, mitochondrial"/>
    <property type="match status" value="1"/>
</dbReference>
<dbReference type="Gene3D" id="3.30.1360.70">
    <property type="entry name" value="Arginyl tRNA synthetase N-terminal domain"/>
    <property type="match status" value="1"/>
</dbReference>
<dbReference type="Gene3D" id="3.40.50.620">
    <property type="entry name" value="HUPs"/>
    <property type="match status" value="1"/>
</dbReference>
<dbReference type="Gene3D" id="1.10.730.10">
    <property type="entry name" value="Isoleucyl-tRNA Synthetase, Domain 1"/>
    <property type="match status" value="1"/>
</dbReference>
<dbReference type="HAMAP" id="MF_00123">
    <property type="entry name" value="Arg_tRNA_synth"/>
    <property type="match status" value="1"/>
</dbReference>
<dbReference type="InterPro" id="IPR001278">
    <property type="entry name" value="Arg-tRNA-ligase"/>
</dbReference>
<dbReference type="InterPro" id="IPR005148">
    <property type="entry name" value="Arg-tRNA-synth_N"/>
</dbReference>
<dbReference type="InterPro" id="IPR036695">
    <property type="entry name" value="Arg-tRNA-synth_N_sf"/>
</dbReference>
<dbReference type="InterPro" id="IPR035684">
    <property type="entry name" value="ArgRS_core"/>
</dbReference>
<dbReference type="InterPro" id="IPR008909">
    <property type="entry name" value="DALR_anticod-bd"/>
</dbReference>
<dbReference type="InterPro" id="IPR014729">
    <property type="entry name" value="Rossmann-like_a/b/a_fold"/>
</dbReference>
<dbReference type="InterPro" id="IPR009080">
    <property type="entry name" value="tRNAsynth_Ia_anticodon-bd"/>
</dbReference>
<dbReference type="NCBIfam" id="TIGR00456">
    <property type="entry name" value="argS"/>
    <property type="match status" value="1"/>
</dbReference>
<dbReference type="PANTHER" id="PTHR11956:SF5">
    <property type="entry name" value="ARGININE--TRNA LIGASE, CYTOPLASMIC"/>
    <property type="match status" value="1"/>
</dbReference>
<dbReference type="PANTHER" id="PTHR11956">
    <property type="entry name" value="ARGINYL-TRNA SYNTHETASE"/>
    <property type="match status" value="1"/>
</dbReference>
<dbReference type="Pfam" id="PF03485">
    <property type="entry name" value="Arg_tRNA_synt_N"/>
    <property type="match status" value="1"/>
</dbReference>
<dbReference type="Pfam" id="PF05746">
    <property type="entry name" value="DALR_1"/>
    <property type="match status" value="1"/>
</dbReference>
<dbReference type="Pfam" id="PF00750">
    <property type="entry name" value="tRNA-synt_1d"/>
    <property type="match status" value="1"/>
</dbReference>
<dbReference type="PRINTS" id="PR01038">
    <property type="entry name" value="TRNASYNTHARG"/>
</dbReference>
<dbReference type="SMART" id="SM01016">
    <property type="entry name" value="Arg_tRNA_synt_N"/>
    <property type="match status" value="1"/>
</dbReference>
<dbReference type="SMART" id="SM00836">
    <property type="entry name" value="DALR_1"/>
    <property type="match status" value="1"/>
</dbReference>
<dbReference type="SUPFAM" id="SSF47323">
    <property type="entry name" value="Anticodon-binding domain of a subclass of class I aminoacyl-tRNA synthetases"/>
    <property type="match status" value="1"/>
</dbReference>
<dbReference type="SUPFAM" id="SSF55190">
    <property type="entry name" value="Arginyl-tRNA synthetase (ArgRS), N-terminal 'additional' domain"/>
    <property type="match status" value="1"/>
</dbReference>
<dbReference type="SUPFAM" id="SSF52374">
    <property type="entry name" value="Nucleotidylyl transferase"/>
    <property type="match status" value="1"/>
</dbReference>
<proteinExistence type="inferred from homology"/>
<name>SYR_BDEBA</name>
<protein>
    <recommendedName>
        <fullName evidence="1">Arginine--tRNA ligase</fullName>
        <ecNumber evidence="1">6.1.1.19</ecNumber>
    </recommendedName>
    <alternativeName>
        <fullName evidence="1">Arginyl-tRNA synthetase</fullName>
        <shortName evidence="1">ArgRS</shortName>
    </alternativeName>
</protein>
<keyword id="KW-0030">Aminoacyl-tRNA synthetase</keyword>
<keyword id="KW-0067">ATP-binding</keyword>
<keyword id="KW-0963">Cytoplasm</keyword>
<keyword id="KW-0436">Ligase</keyword>
<keyword id="KW-0547">Nucleotide-binding</keyword>
<keyword id="KW-0648">Protein biosynthesis</keyword>
<keyword id="KW-1185">Reference proteome</keyword>
<sequence>MIKHDSIRLLATNLLKDAIGRAYPDFSASEDDIYKALVNPPKSDLGDLAFGCFILAKALKTAPPQVATAVAAQMKGATAVAAGPYINIRFDEQTHGEQVLATILDGSYFKKPLMEKSPKTMIEYSQPNTHKELHVGHMRNLCLGDAIVRMLRYSGREIVSSTFPGDMGTHVAKCLWYMKKHNQEPVPETEKGEWLGRMYSKANLLLEDQNGTPQEDINRQELTAILHQLEGKTGPYYDLWLETREWSIELMKKVYAWADVTFDEWYFESEMDSPSAAWVKQLYAEGKLEMSQGAIGKDLESEKLGFCMLLKSDGTGLYATKDLLLAKHKFEDVKIEKSVYVVDMRQALHFKQVFRVLEILGFEQAKNCFHLQYNYVELPDGAMSSRKGNIVPLRELVHRMEDHVKTTYLSRYKGEWSEEDVEKIAGQVAKGAIFYGMLRMDTNKKIVFDMNEWLKLDGESGPFVQYSYARISSLGRKFPRTAGAKIDWSRLNHASERQLMQSLGGFNTAVAAAAENFKPSAICTYLYDLAKSFNVFYHECPIGTEADVATREARLALSEAVGLTLKNGLAVLGMPAPEKM</sequence>
<comment type="catalytic activity">
    <reaction evidence="1">
        <text>tRNA(Arg) + L-arginine + ATP = L-arginyl-tRNA(Arg) + AMP + diphosphate</text>
        <dbReference type="Rhea" id="RHEA:20301"/>
        <dbReference type="Rhea" id="RHEA-COMP:9658"/>
        <dbReference type="Rhea" id="RHEA-COMP:9673"/>
        <dbReference type="ChEBI" id="CHEBI:30616"/>
        <dbReference type="ChEBI" id="CHEBI:32682"/>
        <dbReference type="ChEBI" id="CHEBI:33019"/>
        <dbReference type="ChEBI" id="CHEBI:78442"/>
        <dbReference type="ChEBI" id="CHEBI:78513"/>
        <dbReference type="ChEBI" id="CHEBI:456215"/>
        <dbReference type="EC" id="6.1.1.19"/>
    </reaction>
</comment>
<comment type="subunit">
    <text evidence="1">Monomer.</text>
</comment>
<comment type="subcellular location">
    <subcellularLocation>
        <location evidence="1">Cytoplasm</location>
    </subcellularLocation>
</comment>
<comment type="similarity">
    <text evidence="1">Belongs to the class-I aminoacyl-tRNA synthetase family.</text>
</comment>
<organism>
    <name type="scientific">Bdellovibrio bacteriovorus (strain ATCC 15356 / DSM 50701 / NCIMB 9529 / HD100)</name>
    <dbReference type="NCBI Taxonomy" id="264462"/>
    <lineage>
        <taxon>Bacteria</taxon>
        <taxon>Pseudomonadati</taxon>
        <taxon>Bdellovibrionota</taxon>
        <taxon>Bdellovibrionia</taxon>
        <taxon>Bdellovibrionales</taxon>
        <taxon>Pseudobdellovibrionaceae</taxon>
        <taxon>Bdellovibrio</taxon>
    </lineage>
</organism>